<name>Y1103_PSYA2</name>
<sequence>MLDLANMTPKEVRALIGKNEINKPTSGMCKGHIQANLVIVPKNLAYDFLLFAQRNPKSCPILDVTDVGSSEPRLMAKGADLKSDVPMYRIYEFGELVAEVSDLTDYWREDLVCFLLGCSFSFESAMLNASIPVRHIEDNHNVPMYITNIETEPAGQFHGKMVVSMRPIPYPLITRAVQATSRFPQVHGAPIHIGDPSVIGITDIHSPDFGDASLIKEGEVPVFWACGVTPQSIAMTSKPELMITHSPGYMFICDPKDEDLAVL</sequence>
<proteinExistence type="inferred from homology"/>
<dbReference type="EC" id="4.2.1.-" evidence="1"/>
<dbReference type="EMBL" id="CP000082">
    <property type="protein sequence ID" value="AAZ18954.1"/>
    <property type="molecule type" value="Genomic_DNA"/>
</dbReference>
<dbReference type="RefSeq" id="WP_011280376.1">
    <property type="nucleotide sequence ID" value="NC_007204.1"/>
</dbReference>
<dbReference type="SMR" id="Q4FSQ4"/>
<dbReference type="STRING" id="259536.Psyc_1103"/>
<dbReference type="KEGG" id="par:Psyc_1103"/>
<dbReference type="eggNOG" id="COG4336">
    <property type="taxonomic scope" value="Bacteria"/>
</dbReference>
<dbReference type="HOGENOM" id="CLU_059759_0_0_6"/>
<dbReference type="OrthoDB" id="149585at2"/>
<dbReference type="Proteomes" id="UP000000546">
    <property type="component" value="Chromosome"/>
</dbReference>
<dbReference type="GO" id="GO:0016829">
    <property type="term" value="F:lyase activity"/>
    <property type="evidence" value="ECO:0007669"/>
    <property type="project" value="UniProtKB-KW"/>
</dbReference>
<dbReference type="FunFam" id="3.30.2040.10:FF:000001">
    <property type="entry name" value="D-glutamate cyclase, mitochondrial"/>
    <property type="match status" value="1"/>
</dbReference>
<dbReference type="Gene3D" id="3.40.1640.10">
    <property type="entry name" value="PSTPO5379-like"/>
    <property type="match status" value="1"/>
</dbReference>
<dbReference type="Gene3D" id="3.30.2040.10">
    <property type="entry name" value="PSTPO5379-like domain"/>
    <property type="match status" value="1"/>
</dbReference>
<dbReference type="HAMAP" id="MF_01830">
    <property type="entry name" value="Hydro_lyase"/>
    <property type="match status" value="1"/>
</dbReference>
<dbReference type="InterPro" id="IPR009906">
    <property type="entry name" value="D-Glu_cyclase"/>
</dbReference>
<dbReference type="InterPro" id="IPR038021">
    <property type="entry name" value="Putative_hydro-lyase"/>
</dbReference>
<dbReference type="InterPro" id="IPR016938">
    <property type="entry name" value="UPF0317"/>
</dbReference>
<dbReference type="NCBIfam" id="NF003969">
    <property type="entry name" value="PRK05463.1"/>
    <property type="match status" value="1"/>
</dbReference>
<dbReference type="PANTHER" id="PTHR32022">
    <property type="entry name" value="D-GLUTAMATE CYCLASE, MITOCHONDRIAL"/>
    <property type="match status" value="1"/>
</dbReference>
<dbReference type="PANTHER" id="PTHR32022:SF10">
    <property type="entry name" value="D-GLUTAMATE CYCLASE, MITOCHONDRIAL"/>
    <property type="match status" value="1"/>
</dbReference>
<dbReference type="Pfam" id="PF07286">
    <property type="entry name" value="D-Glu_cyclase"/>
    <property type="match status" value="1"/>
</dbReference>
<dbReference type="PIRSF" id="PIRSF029755">
    <property type="entry name" value="UCP029755"/>
    <property type="match status" value="1"/>
</dbReference>
<dbReference type="SUPFAM" id="SSF160920">
    <property type="entry name" value="PSTPO5379-like"/>
    <property type="match status" value="1"/>
</dbReference>
<reference key="1">
    <citation type="journal article" date="2010" name="Appl. Environ. Microbiol.">
        <title>The genome sequence of Psychrobacter arcticus 273-4, a psychroactive Siberian permafrost bacterium, reveals mechanisms for adaptation to low-temperature growth.</title>
        <authorList>
            <person name="Ayala-del-Rio H.L."/>
            <person name="Chain P.S."/>
            <person name="Grzymski J.J."/>
            <person name="Ponder M.A."/>
            <person name="Ivanova N."/>
            <person name="Bergholz P.W."/>
            <person name="Di Bartolo G."/>
            <person name="Hauser L."/>
            <person name="Land M."/>
            <person name="Bakermans C."/>
            <person name="Rodrigues D."/>
            <person name="Klappenbach J."/>
            <person name="Zarka D."/>
            <person name="Larimer F."/>
            <person name="Richardson P."/>
            <person name="Murray A."/>
            <person name="Thomashow M."/>
            <person name="Tiedje J.M."/>
        </authorList>
    </citation>
    <scope>NUCLEOTIDE SEQUENCE [LARGE SCALE GENOMIC DNA]</scope>
    <source>
        <strain>DSM 17307 / VKM B-2377 / 273-4</strain>
    </source>
</reference>
<evidence type="ECO:0000255" key="1">
    <source>
        <dbReference type="HAMAP-Rule" id="MF_01830"/>
    </source>
</evidence>
<protein>
    <recommendedName>
        <fullName evidence="1">Putative hydro-lyase Psyc_1103</fullName>
        <ecNumber evidence="1">4.2.1.-</ecNumber>
    </recommendedName>
</protein>
<keyword id="KW-0456">Lyase</keyword>
<keyword id="KW-1185">Reference proteome</keyword>
<accession>Q4FSQ4</accession>
<feature type="chain" id="PRO_0000379856" description="Putative hydro-lyase Psyc_1103">
    <location>
        <begin position="1"/>
        <end position="263"/>
    </location>
</feature>
<organism>
    <name type="scientific">Psychrobacter arcticus (strain DSM 17307 / VKM B-2377 / 273-4)</name>
    <dbReference type="NCBI Taxonomy" id="259536"/>
    <lineage>
        <taxon>Bacteria</taxon>
        <taxon>Pseudomonadati</taxon>
        <taxon>Pseudomonadota</taxon>
        <taxon>Gammaproteobacteria</taxon>
        <taxon>Moraxellales</taxon>
        <taxon>Moraxellaceae</taxon>
        <taxon>Psychrobacter</taxon>
    </lineage>
</organism>
<comment type="similarity">
    <text evidence="1">Belongs to the D-glutamate cyclase family.</text>
</comment>
<gene>
    <name type="ordered locus">Psyc_1103</name>
</gene>